<feature type="chain" id="PRO_1000193873" description="Large ribosomal subunit protein bL19">
    <location>
        <begin position="1"/>
        <end position="129"/>
    </location>
</feature>
<dbReference type="EMBL" id="CP001096">
    <property type="protein sequence ID" value="ACE98802.1"/>
    <property type="molecule type" value="Genomic_DNA"/>
</dbReference>
<dbReference type="RefSeq" id="WP_011155809.1">
    <property type="nucleotide sequence ID" value="NC_011004.1"/>
</dbReference>
<dbReference type="SMR" id="B3Q853"/>
<dbReference type="GeneID" id="66891248"/>
<dbReference type="KEGG" id="rpt:Rpal_0242"/>
<dbReference type="HOGENOM" id="CLU_103507_2_1_5"/>
<dbReference type="OrthoDB" id="9803541at2"/>
<dbReference type="Proteomes" id="UP000001725">
    <property type="component" value="Chromosome"/>
</dbReference>
<dbReference type="GO" id="GO:0022625">
    <property type="term" value="C:cytosolic large ribosomal subunit"/>
    <property type="evidence" value="ECO:0007669"/>
    <property type="project" value="TreeGrafter"/>
</dbReference>
<dbReference type="GO" id="GO:0003735">
    <property type="term" value="F:structural constituent of ribosome"/>
    <property type="evidence" value="ECO:0007669"/>
    <property type="project" value="InterPro"/>
</dbReference>
<dbReference type="GO" id="GO:0006412">
    <property type="term" value="P:translation"/>
    <property type="evidence" value="ECO:0007669"/>
    <property type="project" value="UniProtKB-UniRule"/>
</dbReference>
<dbReference type="FunFam" id="2.30.30.790:FF:000001">
    <property type="entry name" value="50S ribosomal protein L19"/>
    <property type="match status" value="1"/>
</dbReference>
<dbReference type="Gene3D" id="2.30.30.790">
    <property type="match status" value="1"/>
</dbReference>
<dbReference type="HAMAP" id="MF_00402">
    <property type="entry name" value="Ribosomal_bL19"/>
    <property type="match status" value="1"/>
</dbReference>
<dbReference type="InterPro" id="IPR001857">
    <property type="entry name" value="Ribosomal_bL19"/>
</dbReference>
<dbReference type="InterPro" id="IPR018257">
    <property type="entry name" value="Ribosomal_bL19_CS"/>
</dbReference>
<dbReference type="InterPro" id="IPR038657">
    <property type="entry name" value="Ribosomal_bL19_sf"/>
</dbReference>
<dbReference type="InterPro" id="IPR008991">
    <property type="entry name" value="Translation_prot_SH3-like_sf"/>
</dbReference>
<dbReference type="NCBIfam" id="TIGR01024">
    <property type="entry name" value="rplS_bact"/>
    <property type="match status" value="1"/>
</dbReference>
<dbReference type="PANTHER" id="PTHR15680:SF9">
    <property type="entry name" value="LARGE RIBOSOMAL SUBUNIT PROTEIN BL19M"/>
    <property type="match status" value="1"/>
</dbReference>
<dbReference type="PANTHER" id="PTHR15680">
    <property type="entry name" value="RIBOSOMAL PROTEIN L19"/>
    <property type="match status" value="1"/>
</dbReference>
<dbReference type="Pfam" id="PF01245">
    <property type="entry name" value="Ribosomal_L19"/>
    <property type="match status" value="1"/>
</dbReference>
<dbReference type="PIRSF" id="PIRSF002191">
    <property type="entry name" value="Ribosomal_L19"/>
    <property type="match status" value="1"/>
</dbReference>
<dbReference type="PRINTS" id="PR00061">
    <property type="entry name" value="RIBOSOMALL19"/>
</dbReference>
<dbReference type="SUPFAM" id="SSF50104">
    <property type="entry name" value="Translation proteins SH3-like domain"/>
    <property type="match status" value="1"/>
</dbReference>
<dbReference type="PROSITE" id="PS01015">
    <property type="entry name" value="RIBOSOMAL_L19"/>
    <property type="match status" value="1"/>
</dbReference>
<accession>B3Q853</accession>
<sequence length="129" mass="14298">MNLIQTLEKEQFDKLSAGKTIPEFGPGDTVIVNVKVVEGERSRVQAYEGVCIGRSGGGINESFTVRKISYGEGVERVFPLLSPMIDSIKVVRRGKVRRAKLYYLRNLRGKSARIVEKKQDRTAAVAAAE</sequence>
<proteinExistence type="inferred from homology"/>
<evidence type="ECO:0000255" key="1">
    <source>
        <dbReference type="HAMAP-Rule" id="MF_00402"/>
    </source>
</evidence>
<evidence type="ECO:0000305" key="2"/>
<gene>
    <name evidence="1" type="primary">rplS</name>
    <name type="ordered locus">Rpal_0242</name>
</gene>
<name>RL19_RHOPT</name>
<keyword id="KW-0687">Ribonucleoprotein</keyword>
<keyword id="KW-0689">Ribosomal protein</keyword>
<organism>
    <name type="scientific">Rhodopseudomonas palustris (strain TIE-1)</name>
    <dbReference type="NCBI Taxonomy" id="395960"/>
    <lineage>
        <taxon>Bacteria</taxon>
        <taxon>Pseudomonadati</taxon>
        <taxon>Pseudomonadota</taxon>
        <taxon>Alphaproteobacteria</taxon>
        <taxon>Hyphomicrobiales</taxon>
        <taxon>Nitrobacteraceae</taxon>
        <taxon>Rhodopseudomonas</taxon>
    </lineage>
</organism>
<protein>
    <recommendedName>
        <fullName evidence="1">Large ribosomal subunit protein bL19</fullName>
    </recommendedName>
    <alternativeName>
        <fullName evidence="2">50S ribosomal protein L19</fullName>
    </alternativeName>
</protein>
<comment type="function">
    <text evidence="1">This protein is located at the 30S-50S ribosomal subunit interface and may play a role in the structure and function of the aminoacyl-tRNA binding site.</text>
</comment>
<comment type="similarity">
    <text evidence="1">Belongs to the bacterial ribosomal protein bL19 family.</text>
</comment>
<reference key="1">
    <citation type="submission" date="2008-05" db="EMBL/GenBank/DDBJ databases">
        <title>Complete sequence of Rhodopseudomonas palustris TIE-1.</title>
        <authorList>
            <consortium name="US DOE Joint Genome Institute"/>
            <person name="Lucas S."/>
            <person name="Copeland A."/>
            <person name="Lapidus A."/>
            <person name="Glavina del Rio T."/>
            <person name="Dalin E."/>
            <person name="Tice H."/>
            <person name="Pitluck S."/>
            <person name="Chain P."/>
            <person name="Malfatti S."/>
            <person name="Shin M."/>
            <person name="Vergez L."/>
            <person name="Lang D."/>
            <person name="Schmutz J."/>
            <person name="Larimer F."/>
            <person name="Land M."/>
            <person name="Hauser L."/>
            <person name="Kyrpides N."/>
            <person name="Mikhailova N."/>
            <person name="Emerson D."/>
            <person name="Newman D.K."/>
            <person name="Roden E."/>
            <person name="Richardson P."/>
        </authorList>
    </citation>
    <scope>NUCLEOTIDE SEQUENCE [LARGE SCALE GENOMIC DNA]</scope>
    <source>
        <strain>TIE-1</strain>
    </source>
</reference>